<dbReference type="EMBL" id="AC153909">
    <property type="status" value="NOT_ANNOTATED_CDS"/>
    <property type="molecule type" value="Genomic_DNA"/>
</dbReference>
<dbReference type="EMBL" id="BC140954">
    <property type="protein sequence ID" value="AAI40955.1"/>
    <property type="molecule type" value="mRNA"/>
</dbReference>
<dbReference type="CCDS" id="CCDS51734.1"/>
<dbReference type="RefSeq" id="NP_001094913.1">
    <property type="nucleotide sequence ID" value="NM_001101443.1"/>
</dbReference>
<dbReference type="RefSeq" id="XP_006505026.1">
    <property type="nucleotide sequence ID" value="XM_006504963.5"/>
</dbReference>
<dbReference type="RefSeq" id="XP_006505027.1">
    <property type="nucleotide sequence ID" value="XM_006504964.4"/>
</dbReference>
<dbReference type="FunCoup" id="B2RU40">
    <property type="interactions" value="33"/>
</dbReference>
<dbReference type="STRING" id="10090.ENSMUSP00000123751"/>
<dbReference type="iPTMnet" id="B2RU40"/>
<dbReference type="PhosphoSitePlus" id="B2RU40"/>
<dbReference type="PaxDb" id="10090-ENSMUSP00000123751"/>
<dbReference type="ProteomicsDB" id="291673"/>
<dbReference type="Antibodypedia" id="67265">
    <property type="antibodies" value="70 antibodies from 13 providers"/>
</dbReference>
<dbReference type="Ensembl" id="ENSMUST00000159200.2">
    <property type="protein sequence ID" value="ENSMUSP00000123751.2"/>
    <property type="gene ID" value="ENSMUSG00000079654.4"/>
</dbReference>
<dbReference type="GeneID" id="101359"/>
<dbReference type="KEGG" id="mmu:101359"/>
<dbReference type="UCSC" id="uc009bcz.2">
    <property type="organism name" value="mouse"/>
</dbReference>
<dbReference type="AGR" id="MGI:2141677"/>
<dbReference type="CTD" id="401399"/>
<dbReference type="MGI" id="MGI:2141677">
    <property type="gene designation" value="Prrt4"/>
</dbReference>
<dbReference type="VEuPathDB" id="HostDB:ENSMUSG00000079654"/>
<dbReference type="eggNOG" id="ENOG502QU49">
    <property type="taxonomic scope" value="Eukaryota"/>
</dbReference>
<dbReference type="GeneTree" id="ENSGT00730000111591"/>
<dbReference type="HOGENOM" id="CLU_351937_0_0_1"/>
<dbReference type="InParanoid" id="B2RU40"/>
<dbReference type="OMA" id="ARCWAKL"/>
<dbReference type="OrthoDB" id="10066605at2759"/>
<dbReference type="BioGRID-ORCS" id="101359">
    <property type="hits" value="7 hits in 77 CRISPR screens"/>
</dbReference>
<dbReference type="PRO" id="PR:B2RU40"/>
<dbReference type="Proteomes" id="UP000000589">
    <property type="component" value="Chromosome 6"/>
</dbReference>
<dbReference type="RNAct" id="B2RU40">
    <property type="molecule type" value="protein"/>
</dbReference>
<dbReference type="Bgee" id="ENSMUSG00000079654">
    <property type="expression patterns" value="Expressed in epithelium of lens and 46 other cell types or tissues"/>
</dbReference>
<dbReference type="GO" id="GO:0016020">
    <property type="term" value="C:membrane"/>
    <property type="evidence" value="ECO:0007669"/>
    <property type="project" value="UniProtKB-SubCell"/>
</dbReference>
<dbReference type="InterPro" id="IPR052836">
    <property type="entry name" value="PRRT_domain-containing"/>
</dbReference>
<dbReference type="PANTHER" id="PTHR35578:SF6">
    <property type="entry name" value="PROLINE-RICH TRANSMEMBRANE PROTEIN 4"/>
    <property type="match status" value="1"/>
</dbReference>
<dbReference type="PANTHER" id="PTHR35578">
    <property type="entry name" value="PROLINE-RICH TRANSMEMBRANE PROTEIN 4-RELATED"/>
    <property type="match status" value="1"/>
</dbReference>
<proteinExistence type="evidence at protein level"/>
<organism>
    <name type="scientific">Mus musculus</name>
    <name type="common">Mouse</name>
    <dbReference type="NCBI Taxonomy" id="10090"/>
    <lineage>
        <taxon>Eukaryota</taxon>
        <taxon>Metazoa</taxon>
        <taxon>Chordata</taxon>
        <taxon>Craniata</taxon>
        <taxon>Vertebrata</taxon>
        <taxon>Euteleostomi</taxon>
        <taxon>Mammalia</taxon>
        <taxon>Eutheria</taxon>
        <taxon>Euarchontoglires</taxon>
        <taxon>Glires</taxon>
        <taxon>Rodentia</taxon>
        <taxon>Myomorpha</taxon>
        <taxon>Muroidea</taxon>
        <taxon>Muridae</taxon>
        <taxon>Murinae</taxon>
        <taxon>Mus</taxon>
        <taxon>Mus</taxon>
    </lineage>
</organism>
<gene>
    <name type="primary">Prrt4</name>
</gene>
<keyword id="KW-0472">Membrane</keyword>
<keyword id="KW-0597">Phosphoprotein</keyword>
<keyword id="KW-1185">Reference proteome</keyword>
<keyword id="KW-0732">Signal</keyword>
<keyword id="KW-0812">Transmembrane</keyword>
<keyword id="KW-1133">Transmembrane helix</keyword>
<feature type="signal peptide" evidence="1">
    <location>
        <begin position="1"/>
        <end position="18"/>
    </location>
</feature>
<feature type="chain" id="PRO_0000394499" description="Proline-rich transmembrane protein 4">
    <location>
        <begin position="19"/>
        <end position="902"/>
    </location>
</feature>
<feature type="transmembrane region" description="Helical" evidence="1">
    <location>
        <begin position="371"/>
        <end position="391"/>
    </location>
</feature>
<feature type="transmembrane region" description="Helical" evidence="1">
    <location>
        <begin position="393"/>
        <end position="413"/>
    </location>
</feature>
<feature type="transmembrane region" description="Helical" evidence="1">
    <location>
        <begin position="432"/>
        <end position="452"/>
    </location>
</feature>
<feature type="transmembrane region" description="Helical" evidence="1">
    <location>
        <begin position="468"/>
        <end position="488"/>
    </location>
</feature>
<feature type="transmembrane region" description="Helical" evidence="1">
    <location>
        <begin position="501"/>
        <end position="521"/>
    </location>
</feature>
<feature type="region of interest" description="Disordered" evidence="2">
    <location>
        <begin position="72"/>
        <end position="92"/>
    </location>
</feature>
<feature type="region of interest" description="Disordered" evidence="2">
    <location>
        <begin position="121"/>
        <end position="149"/>
    </location>
</feature>
<feature type="region of interest" description="Disordered" evidence="2">
    <location>
        <begin position="281"/>
        <end position="333"/>
    </location>
</feature>
<feature type="region of interest" description="Disordered" evidence="2">
    <location>
        <begin position="701"/>
        <end position="723"/>
    </location>
</feature>
<feature type="region of interest" description="Disordered" evidence="2">
    <location>
        <begin position="774"/>
        <end position="811"/>
    </location>
</feature>
<feature type="region of interest" description="Disordered" evidence="2">
    <location>
        <begin position="839"/>
        <end position="872"/>
    </location>
</feature>
<feature type="compositionally biased region" description="Polar residues" evidence="2">
    <location>
        <begin position="122"/>
        <end position="136"/>
    </location>
</feature>
<feature type="compositionally biased region" description="Polar residues" evidence="2">
    <location>
        <begin position="281"/>
        <end position="302"/>
    </location>
</feature>
<feature type="compositionally biased region" description="Polar residues" evidence="2">
    <location>
        <begin position="704"/>
        <end position="717"/>
    </location>
</feature>
<feature type="compositionally biased region" description="Pro residues" evidence="2">
    <location>
        <begin position="786"/>
        <end position="798"/>
    </location>
</feature>
<feature type="compositionally biased region" description="Low complexity" evidence="2">
    <location>
        <begin position="799"/>
        <end position="811"/>
    </location>
</feature>
<feature type="compositionally biased region" description="Low complexity" evidence="2">
    <location>
        <begin position="843"/>
        <end position="854"/>
    </location>
</feature>
<feature type="modified residue" description="Phosphoserine" evidence="4">
    <location>
        <position position="642"/>
    </location>
</feature>
<feature type="sequence conflict" description="In Ref. 2; AAI40955." evidence="3" ref="2">
    <original>L</original>
    <variation>P</variation>
    <location>
        <position position="331"/>
    </location>
</feature>
<feature type="sequence conflict" description="In Ref. 2; AAI40955." evidence="3" ref="2">
    <original>I</original>
    <variation>T</variation>
    <location>
        <position position="772"/>
    </location>
</feature>
<evidence type="ECO:0000255" key="1"/>
<evidence type="ECO:0000256" key="2">
    <source>
        <dbReference type="SAM" id="MobiDB-lite"/>
    </source>
</evidence>
<evidence type="ECO:0000305" key="3"/>
<evidence type="ECO:0007744" key="4">
    <source>
    </source>
</evidence>
<reference key="1">
    <citation type="journal article" date="2009" name="PLoS Biol.">
        <title>Lineage-specific biology revealed by a finished genome assembly of the mouse.</title>
        <authorList>
            <person name="Church D.M."/>
            <person name="Goodstadt L."/>
            <person name="Hillier L.W."/>
            <person name="Zody M.C."/>
            <person name="Goldstein S."/>
            <person name="She X."/>
            <person name="Bult C.J."/>
            <person name="Agarwala R."/>
            <person name="Cherry J.L."/>
            <person name="DiCuccio M."/>
            <person name="Hlavina W."/>
            <person name="Kapustin Y."/>
            <person name="Meric P."/>
            <person name="Maglott D."/>
            <person name="Birtle Z."/>
            <person name="Marques A.C."/>
            <person name="Graves T."/>
            <person name="Zhou S."/>
            <person name="Teague B."/>
            <person name="Potamousis K."/>
            <person name="Churas C."/>
            <person name="Place M."/>
            <person name="Herschleb J."/>
            <person name="Runnheim R."/>
            <person name="Forrest D."/>
            <person name="Amos-Landgraf J."/>
            <person name="Schwartz D.C."/>
            <person name="Cheng Z."/>
            <person name="Lindblad-Toh K."/>
            <person name="Eichler E.E."/>
            <person name="Ponting C.P."/>
        </authorList>
    </citation>
    <scope>NUCLEOTIDE SEQUENCE [LARGE SCALE GENOMIC DNA]</scope>
    <source>
        <strain>C57BL/6J</strain>
    </source>
</reference>
<reference key="2">
    <citation type="journal article" date="2004" name="Genome Res.">
        <title>The status, quality, and expansion of the NIH full-length cDNA project: the Mammalian Gene Collection (MGC).</title>
        <authorList>
            <consortium name="The MGC Project Team"/>
        </authorList>
    </citation>
    <scope>NUCLEOTIDE SEQUENCE [LARGE SCALE MRNA]</scope>
    <source>
        <tissue>Brain</tissue>
    </source>
</reference>
<reference key="3">
    <citation type="journal article" date="2010" name="Cell">
        <title>A tissue-specific atlas of mouse protein phosphorylation and expression.</title>
        <authorList>
            <person name="Huttlin E.L."/>
            <person name="Jedrychowski M.P."/>
            <person name="Elias J.E."/>
            <person name="Goswami T."/>
            <person name="Rad R."/>
            <person name="Beausoleil S.A."/>
            <person name="Villen J."/>
            <person name="Haas W."/>
            <person name="Sowa M.E."/>
            <person name="Gygi S.P."/>
        </authorList>
    </citation>
    <scope>PHOSPHORYLATION [LARGE SCALE ANALYSIS] AT SER-642</scope>
    <scope>IDENTIFICATION BY MASS SPECTROMETRY [LARGE SCALE ANALYSIS]</scope>
    <source>
        <tissue>Brain</tissue>
    </source>
</reference>
<accession>B2RU40</accession>
<accession>E9QKZ9</accession>
<name>PRRT4_MOUSE</name>
<sequence length="902" mass="93979">MAGRSCLELGLFCWVLLAVPVGPQPASSVPGAPLTTLTPPPQSEASMLSLNLGLNFKFHLRGPAAVWGNPVTETHPLSPGLGQESEEEEEGDLRTDPLWELLVGSPGNYLPEWGSAEGSFTPWASSLPPESTSRLSGPTKRPTAHSQPRMGTVTWATALTATAPPTSAPRPHQSELELKFDVALRAGAAPTLGHRSLPLLPSLRASLAEIAGRLGPFGFFGTTVSPLRNFSRQSYPGTTAHPSFAFEVSDSPGLFGTTGSRPPPLLERKFSSPSLLDSVASPSSASVKTTPVQQDPTVSTSGPDELSPASFGNPSTQPGCEPGSCSEPELLDDLGQPPASPLPLFFLTLEADWAEARARWGLAWEAHVYGAGALFGLVALLALLALALLPWRCPPGAPCLALLDLLLLSAGTTRAFPLFYDAYGHRDRLPTLVWLLLQDLPLPCLAAGLGLACLLLARPRTPRCPAGLAALLLLGLGLAAAAALGSAVHRPLRPLRLASRGLHAFLAAFLSGLLLALSCWGGRRRRAGAPLGGAGFKGATPVPQVRSPFAPRESWRRAARTAPVAGTFGLLSGALQGYEVLHALGYGSQAGLEGPWPWWAFQLGLRLGEVGVALPLALLGLYPALCSPRVPRRCWAKLFRLSPGHAAPLLPGGWVPGIPDKEPLGSAIARGDAELLQLCALAGPGPDLLLQGGGCRGFEGAGANPTQSTASSPSSDCTVDFRPPSPINLRRSIEEALCSEALLAPGLFQGPAFGEALPGLGLYRTISLGNKIGAGPSEKSENVPGSPAPPELPSPGAWPPGSSASSGSLCGLSRDSSSMLLCSSPDRPPRCPLVCVLSPPRPSESSPSLPASGSYQALSPPSRDSPEHASELQAEEALLQEQFLDACRQIDELSMGSDTIDL</sequence>
<protein>
    <recommendedName>
        <fullName>Proline-rich transmembrane protein 4</fullName>
    </recommendedName>
</protein>
<comment type="subcellular location">
    <subcellularLocation>
        <location evidence="3">Membrane</location>
        <topology evidence="3">Multi-pass membrane protein</topology>
    </subcellularLocation>
</comment>